<reference key="1">
    <citation type="journal article" date="2003" name="Nat. Genet.">
        <title>Comparative analysis of the genome sequences of Bordetella pertussis, Bordetella parapertussis and Bordetella bronchiseptica.</title>
        <authorList>
            <person name="Parkhill J."/>
            <person name="Sebaihia M."/>
            <person name="Preston A."/>
            <person name="Murphy L.D."/>
            <person name="Thomson N.R."/>
            <person name="Harris D.E."/>
            <person name="Holden M.T.G."/>
            <person name="Churcher C.M."/>
            <person name="Bentley S.D."/>
            <person name="Mungall K.L."/>
            <person name="Cerdeno-Tarraga A.-M."/>
            <person name="Temple L."/>
            <person name="James K.D."/>
            <person name="Harris B."/>
            <person name="Quail M.A."/>
            <person name="Achtman M."/>
            <person name="Atkin R."/>
            <person name="Baker S."/>
            <person name="Basham D."/>
            <person name="Bason N."/>
            <person name="Cherevach I."/>
            <person name="Chillingworth T."/>
            <person name="Collins M."/>
            <person name="Cronin A."/>
            <person name="Davis P."/>
            <person name="Doggett J."/>
            <person name="Feltwell T."/>
            <person name="Goble A."/>
            <person name="Hamlin N."/>
            <person name="Hauser H."/>
            <person name="Holroyd S."/>
            <person name="Jagels K."/>
            <person name="Leather S."/>
            <person name="Moule S."/>
            <person name="Norberczak H."/>
            <person name="O'Neil S."/>
            <person name="Ormond D."/>
            <person name="Price C."/>
            <person name="Rabbinowitsch E."/>
            <person name="Rutter S."/>
            <person name="Sanders M."/>
            <person name="Saunders D."/>
            <person name="Seeger K."/>
            <person name="Sharp S."/>
            <person name="Simmonds M."/>
            <person name="Skelton J."/>
            <person name="Squares R."/>
            <person name="Squares S."/>
            <person name="Stevens K."/>
            <person name="Unwin L."/>
            <person name="Whitehead S."/>
            <person name="Barrell B.G."/>
            <person name="Maskell D.J."/>
        </authorList>
    </citation>
    <scope>NUCLEOTIDE SEQUENCE [LARGE SCALE GENOMIC DNA]</scope>
    <source>
        <strain>12822 / ATCC BAA-587 / NCTC 13253</strain>
    </source>
</reference>
<dbReference type="EC" id="2.5.1.61" evidence="1"/>
<dbReference type="EMBL" id="BX640431">
    <property type="protein sequence ID" value="CAE37934.1"/>
    <property type="molecule type" value="Genomic_DNA"/>
</dbReference>
<dbReference type="RefSeq" id="WP_003812742.1">
    <property type="nucleotide sequence ID" value="NC_002928.3"/>
</dbReference>
<dbReference type="SMR" id="Q7W785"/>
<dbReference type="GeneID" id="93204427"/>
<dbReference type="KEGG" id="bpa:BPP2642"/>
<dbReference type="HOGENOM" id="CLU_019704_1_0_4"/>
<dbReference type="UniPathway" id="UPA00251">
    <property type="reaction ID" value="UER00319"/>
</dbReference>
<dbReference type="Proteomes" id="UP000001421">
    <property type="component" value="Chromosome"/>
</dbReference>
<dbReference type="GO" id="GO:0005737">
    <property type="term" value="C:cytoplasm"/>
    <property type="evidence" value="ECO:0007669"/>
    <property type="project" value="TreeGrafter"/>
</dbReference>
<dbReference type="GO" id="GO:0004418">
    <property type="term" value="F:hydroxymethylbilane synthase activity"/>
    <property type="evidence" value="ECO:0007669"/>
    <property type="project" value="UniProtKB-UniRule"/>
</dbReference>
<dbReference type="GO" id="GO:0006782">
    <property type="term" value="P:protoporphyrinogen IX biosynthetic process"/>
    <property type="evidence" value="ECO:0007669"/>
    <property type="project" value="UniProtKB-UniRule"/>
</dbReference>
<dbReference type="CDD" id="cd13646">
    <property type="entry name" value="PBP2_EcHMBS_like"/>
    <property type="match status" value="1"/>
</dbReference>
<dbReference type="FunFam" id="3.40.190.10:FF:000004">
    <property type="entry name" value="Porphobilinogen deaminase"/>
    <property type="match status" value="1"/>
</dbReference>
<dbReference type="FunFam" id="3.40.190.10:FF:000005">
    <property type="entry name" value="Porphobilinogen deaminase"/>
    <property type="match status" value="1"/>
</dbReference>
<dbReference type="Gene3D" id="3.40.190.10">
    <property type="entry name" value="Periplasmic binding protein-like II"/>
    <property type="match status" value="2"/>
</dbReference>
<dbReference type="Gene3D" id="3.30.160.40">
    <property type="entry name" value="Porphobilinogen deaminase, C-terminal domain"/>
    <property type="match status" value="1"/>
</dbReference>
<dbReference type="HAMAP" id="MF_00260">
    <property type="entry name" value="Porphobil_deam"/>
    <property type="match status" value="1"/>
</dbReference>
<dbReference type="InterPro" id="IPR000860">
    <property type="entry name" value="HemC"/>
</dbReference>
<dbReference type="InterPro" id="IPR022419">
    <property type="entry name" value="Porphobilin_deaminase_cofac_BS"/>
</dbReference>
<dbReference type="InterPro" id="IPR022417">
    <property type="entry name" value="Porphobilin_deaminase_N"/>
</dbReference>
<dbReference type="InterPro" id="IPR022418">
    <property type="entry name" value="Porphobilinogen_deaminase_C"/>
</dbReference>
<dbReference type="InterPro" id="IPR036803">
    <property type="entry name" value="Porphobilinogen_deaminase_C_sf"/>
</dbReference>
<dbReference type="NCBIfam" id="TIGR00212">
    <property type="entry name" value="hemC"/>
    <property type="match status" value="1"/>
</dbReference>
<dbReference type="PANTHER" id="PTHR11557">
    <property type="entry name" value="PORPHOBILINOGEN DEAMINASE"/>
    <property type="match status" value="1"/>
</dbReference>
<dbReference type="PANTHER" id="PTHR11557:SF0">
    <property type="entry name" value="PORPHOBILINOGEN DEAMINASE"/>
    <property type="match status" value="1"/>
</dbReference>
<dbReference type="Pfam" id="PF01379">
    <property type="entry name" value="Porphobil_deam"/>
    <property type="match status" value="1"/>
</dbReference>
<dbReference type="Pfam" id="PF03900">
    <property type="entry name" value="Porphobil_deamC"/>
    <property type="match status" value="1"/>
</dbReference>
<dbReference type="PIRSF" id="PIRSF001438">
    <property type="entry name" value="4pyrrol_synth_OHMeBilane_synth"/>
    <property type="match status" value="1"/>
</dbReference>
<dbReference type="PRINTS" id="PR00151">
    <property type="entry name" value="PORPHBDMNASE"/>
</dbReference>
<dbReference type="SUPFAM" id="SSF53850">
    <property type="entry name" value="Periplasmic binding protein-like II"/>
    <property type="match status" value="1"/>
</dbReference>
<dbReference type="SUPFAM" id="SSF54782">
    <property type="entry name" value="Porphobilinogen deaminase (hydroxymethylbilane synthase), C-terminal domain"/>
    <property type="match status" value="1"/>
</dbReference>
<dbReference type="PROSITE" id="PS00533">
    <property type="entry name" value="PORPHOBILINOGEN_DEAM"/>
    <property type="match status" value="1"/>
</dbReference>
<gene>
    <name evidence="1" type="primary">hemC</name>
    <name type="ordered locus">BPP2642</name>
</gene>
<sequence length="314" mass="33213">MAAVERLTIATRASRLALWQAEHVRDLLRARYPACSVELLTLTTRGDQILDRTLSKVGGKGLFVKELETALLDGRADLAVHSLKDVPVDLHAPFELSCVLERADPRDAFVSNDYGSLADLPPGAAVGTSSLRRESQIRARYPHLVVKPLRGNLDTRLGKLDNGDYAAIVLAAAGLERLGLAARIRALLEPADSLPAAGQGALGIEILQGRADVRAMLAPLGDAATLACVTAERAVSRMLGGSCQVPLAAYARIDGDELALRALVAAPDGRRIVRAERRGPRDQAQAIGESAARDLLADGADAILAELLPTSPAP</sequence>
<accession>Q7W785</accession>
<protein>
    <recommendedName>
        <fullName evidence="1">Porphobilinogen deaminase</fullName>
        <shortName evidence="1">PBG</shortName>
        <ecNumber evidence="1">2.5.1.61</ecNumber>
    </recommendedName>
    <alternativeName>
        <fullName evidence="1">Hydroxymethylbilane synthase</fullName>
        <shortName evidence="1">HMBS</shortName>
    </alternativeName>
    <alternativeName>
        <fullName evidence="1">Pre-uroporphyrinogen synthase</fullName>
    </alternativeName>
</protein>
<keyword id="KW-0627">Porphyrin biosynthesis</keyword>
<keyword id="KW-0808">Transferase</keyword>
<proteinExistence type="inferred from homology"/>
<comment type="function">
    <text evidence="1">Tetrapolymerization of the monopyrrole PBG into the hydroxymethylbilane pre-uroporphyrinogen in several discrete steps.</text>
</comment>
<comment type="catalytic activity">
    <reaction evidence="1">
        <text>4 porphobilinogen + H2O = hydroxymethylbilane + 4 NH4(+)</text>
        <dbReference type="Rhea" id="RHEA:13185"/>
        <dbReference type="ChEBI" id="CHEBI:15377"/>
        <dbReference type="ChEBI" id="CHEBI:28938"/>
        <dbReference type="ChEBI" id="CHEBI:57845"/>
        <dbReference type="ChEBI" id="CHEBI:58126"/>
        <dbReference type="EC" id="2.5.1.61"/>
    </reaction>
</comment>
<comment type="cofactor">
    <cofactor evidence="1">
        <name>dipyrromethane</name>
        <dbReference type="ChEBI" id="CHEBI:60342"/>
    </cofactor>
    <text evidence="1">Binds 1 dipyrromethane group covalently.</text>
</comment>
<comment type="pathway">
    <text evidence="1">Porphyrin-containing compound metabolism; protoporphyrin-IX biosynthesis; coproporphyrinogen-III from 5-aminolevulinate: step 2/4.</text>
</comment>
<comment type="subunit">
    <text evidence="1">Monomer.</text>
</comment>
<comment type="miscellaneous">
    <text evidence="1">The porphobilinogen subunits are added to the dipyrromethane group.</text>
</comment>
<comment type="similarity">
    <text evidence="1">Belongs to the HMBS family.</text>
</comment>
<feature type="chain" id="PRO_0000142912" description="Porphobilinogen deaminase">
    <location>
        <begin position="1"/>
        <end position="314"/>
    </location>
</feature>
<feature type="modified residue" description="S-(dipyrrolylmethanemethyl)cysteine" evidence="1">
    <location>
        <position position="243"/>
    </location>
</feature>
<organism>
    <name type="scientific">Bordetella parapertussis (strain 12822 / ATCC BAA-587 / NCTC 13253)</name>
    <dbReference type="NCBI Taxonomy" id="257311"/>
    <lineage>
        <taxon>Bacteria</taxon>
        <taxon>Pseudomonadati</taxon>
        <taxon>Pseudomonadota</taxon>
        <taxon>Betaproteobacteria</taxon>
        <taxon>Burkholderiales</taxon>
        <taxon>Alcaligenaceae</taxon>
        <taxon>Bordetella</taxon>
    </lineage>
</organism>
<name>HEM3_BORPA</name>
<evidence type="ECO:0000255" key="1">
    <source>
        <dbReference type="HAMAP-Rule" id="MF_00260"/>
    </source>
</evidence>